<sequence>MKPDAHQVKQFLLNLQDTICQQLTAVDGAEFVEDSWQREAGGGGRSRVLRNGGVFEQAGVNFSHVHGEAMPASATAHRPELAGRSFEAMGVSLVVHPHNPYVPTSHANVRFFIAEKPGADPVWWFGGGFDLTPFYGFEEDAIHWHRTARDLCLPFGEDVYPRYKKWCDEYFYLKHRNEQRGIGGLFFDDLNTPDFDRCFAFMQAVGKGYTDAYLPIVERRKAMAYGERERNFQLYRRGRYVEFNLVWDRGTLFGLQTGGRTESILMSMPPLVRWEYDYQPKDGSPEAALSEFIKVRDWV</sequence>
<gene>
    <name evidence="1" type="primary">hemF</name>
    <name type="ordered locus">b2436</name>
    <name type="ordered locus">JW2429</name>
</gene>
<keyword id="KW-0963">Cytoplasm</keyword>
<keyword id="KW-0903">Direct protein sequencing</keyword>
<keyword id="KW-0350">Heme biosynthesis</keyword>
<keyword id="KW-0464">Manganese</keyword>
<keyword id="KW-0479">Metal-binding</keyword>
<keyword id="KW-0560">Oxidoreductase</keyword>
<keyword id="KW-0627">Porphyrin biosynthesis</keyword>
<keyword id="KW-1185">Reference proteome</keyword>
<reference key="1">
    <citation type="journal article" date="1994" name="J. Bacteriol.">
        <title>Isolation of the hemF operon containing the gene for the Escherichia coli aerobic coproporphyrinogen III oxidase by in vivo complementation of a yeast HEM13 mutant.</title>
        <authorList>
            <person name="Troup B."/>
            <person name="Jahn M."/>
            <person name="Hungerer C."/>
            <person name="Jahn D."/>
        </authorList>
    </citation>
    <scope>NUCLEOTIDE SEQUENCE [GENOMIC DNA]</scope>
    <source>
        <strain>K12</strain>
    </source>
</reference>
<reference key="2">
    <citation type="journal article" date="1997" name="DNA Res.">
        <title>Construction of a contiguous 874-kb sequence of the Escherichia coli-K12 genome corresponding to 50.0-68.8 min on the linkage map and analysis of its sequence features.</title>
        <authorList>
            <person name="Yamamoto Y."/>
            <person name="Aiba H."/>
            <person name="Baba T."/>
            <person name="Hayashi K."/>
            <person name="Inada T."/>
            <person name="Isono K."/>
            <person name="Itoh T."/>
            <person name="Kimura S."/>
            <person name="Kitagawa M."/>
            <person name="Makino K."/>
            <person name="Miki T."/>
            <person name="Mitsuhashi N."/>
            <person name="Mizobuchi K."/>
            <person name="Mori H."/>
            <person name="Nakade S."/>
            <person name="Nakamura Y."/>
            <person name="Nashimoto H."/>
            <person name="Oshima T."/>
            <person name="Oyama S."/>
            <person name="Saito N."/>
            <person name="Sampei G."/>
            <person name="Satoh Y."/>
            <person name="Sivasundaram S."/>
            <person name="Tagami H."/>
            <person name="Takahashi H."/>
            <person name="Takeda J."/>
            <person name="Takemoto K."/>
            <person name="Uehara K."/>
            <person name="Wada C."/>
            <person name="Yamagata S."/>
            <person name="Horiuchi T."/>
        </authorList>
    </citation>
    <scope>NUCLEOTIDE SEQUENCE [LARGE SCALE GENOMIC DNA]</scope>
    <source>
        <strain>K12 / W3110 / ATCC 27325 / DSM 5911</strain>
    </source>
</reference>
<reference key="3">
    <citation type="journal article" date="1997" name="Science">
        <title>The complete genome sequence of Escherichia coli K-12.</title>
        <authorList>
            <person name="Blattner F.R."/>
            <person name="Plunkett G. III"/>
            <person name="Bloch C.A."/>
            <person name="Perna N.T."/>
            <person name="Burland V."/>
            <person name="Riley M."/>
            <person name="Collado-Vides J."/>
            <person name="Glasner J.D."/>
            <person name="Rode C.K."/>
            <person name="Mayhew G.F."/>
            <person name="Gregor J."/>
            <person name="Davis N.W."/>
            <person name="Kirkpatrick H.A."/>
            <person name="Goeden M.A."/>
            <person name="Rose D.J."/>
            <person name="Mau B."/>
            <person name="Shao Y."/>
        </authorList>
    </citation>
    <scope>NUCLEOTIDE SEQUENCE [LARGE SCALE GENOMIC DNA]</scope>
    <source>
        <strain>K12 / MG1655 / ATCC 47076</strain>
    </source>
</reference>
<reference key="4">
    <citation type="journal article" date="2006" name="Mol. Syst. Biol.">
        <title>Highly accurate genome sequences of Escherichia coli K-12 strains MG1655 and W3110.</title>
        <authorList>
            <person name="Hayashi K."/>
            <person name="Morooka N."/>
            <person name="Yamamoto Y."/>
            <person name="Fujita K."/>
            <person name="Isono K."/>
            <person name="Choi S."/>
            <person name="Ohtsubo E."/>
            <person name="Baba T."/>
            <person name="Wanner B.L."/>
            <person name="Mori H."/>
            <person name="Horiuchi T."/>
        </authorList>
    </citation>
    <scope>NUCLEOTIDE SEQUENCE [LARGE SCALE GENOMIC DNA]</scope>
    <source>
        <strain>K12 / W3110 / ATCC 27325 / DSM 5911</strain>
    </source>
</reference>
<reference key="5">
    <citation type="journal article" date="2003" name="FEMS Microbiol. Lett.">
        <title>Oxygen-dependent coproporphyrinogen-III oxidase from Escherichia coli: one-step purification and biochemical characterisation.</title>
        <authorList>
            <person name="Breckau D."/>
            <person name="Mahlitz E."/>
            <person name="Sauerwald A."/>
            <person name="Layer G."/>
            <person name="Jahn D."/>
        </authorList>
    </citation>
    <scope>PROTEIN SEQUENCE OF 1-6</scope>
    <scope>FUNCTION</scope>
    <scope>CATALYTIC ACTIVITY</scope>
    <scope>BIOPHYSICOCHEMICAL PROPERTIES</scope>
    <scope>MASS SPECTROMETRY</scope>
    <scope>ACTIVITY REGULATION</scope>
    <scope>SUBUNIT</scope>
    <scope>CRYSTALLIZATION</scope>
</reference>
<reference key="6">
    <citation type="journal article" date="2003" name="J. Biol. Chem.">
        <title>Oxygen-dependent coproporphyrinogen III oxidase (HemF) from Escherichia coli is stimulated by manganese.</title>
        <authorList>
            <person name="Breckau D."/>
            <person name="Mahlitz E."/>
            <person name="Sauerwald A."/>
            <person name="Layer G."/>
            <person name="Jahn D."/>
        </authorList>
    </citation>
    <scope>PROTEIN SEQUENCE OF 1-18</scope>
    <scope>FUNCTION</scope>
    <scope>CATALYTIC ACTIVITY</scope>
    <scope>BIOPHYSICOCHEMICAL PROPERTIES</scope>
    <scope>COFACTOR</scope>
    <scope>MUTAGENESIS OF HIS-96; HIS-106; HIS-145 AND HIS-175</scope>
    <scope>ACTIVITY REGULATION</scope>
    <scope>MASS SPECTROMETRY</scope>
    <scope>REACTION MECHANISM</scope>
    <scope>SUBUNIT</scope>
</reference>
<name>HEM6_ECOLI</name>
<feature type="chain" id="PRO_0000109894" description="Oxygen-dependent coproporphyrinogen-III oxidase">
    <location>
        <begin position="1"/>
        <end position="299"/>
    </location>
</feature>
<feature type="region of interest" description="Important for dimerization" evidence="1">
    <location>
        <begin position="240"/>
        <end position="275"/>
    </location>
</feature>
<feature type="active site" description="Proton donor" evidence="1">
    <location>
        <position position="106"/>
    </location>
</feature>
<feature type="binding site" evidence="1">
    <location>
        <position position="92"/>
    </location>
    <ligand>
        <name>substrate</name>
    </ligand>
</feature>
<feature type="binding site" evidence="4">
    <location>
        <position position="96"/>
    </location>
    <ligand>
        <name>Mn(2+)</name>
        <dbReference type="ChEBI" id="CHEBI:29035"/>
    </ligand>
</feature>
<feature type="binding site" evidence="4">
    <location>
        <position position="106"/>
    </location>
    <ligand>
        <name>Mn(2+)</name>
        <dbReference type="ChEBI" id="CHEBI:29035"/>
    </ligand>
</feature>
<feature type="binding site" evidence="1">
    <location>
        <begin position="108"/>
        <end position="110"/>
    </location>
    <ligand>
        <name>substrate</name>
    </ligand>
</feature>
<feature type="binding site" evidence="4">
    <location>
        <position position="145"/>
    </location>
    <ligand>
        <name>Mn(2+)</name>
        <dbReference type="ChEBI" id="CHEBI:29035"/>
    </ligand>
</feature>
<feature type="binding site" evidence="4">
    <location>
        <position position="175"/>
    </location>
    <ligand>
        <name>Mn(2+)</name>
        <dbReference type="ChEBI" id="CHEBI:29035"/>
    </ligand>
</feature>
<feature type="binding site" evidence="1">
    <location>
        <begin position="258"/>
        <end position="260"/>
    </location>
    <ligand>
        <name>substrate</name>
    </ligand>
</feature>
<feature type="site" description="Important for dimerization" evidence="1">
    <location>
        <position position="175"/>
    </location>
</feature>
<feature type="mutagenesis site" description="Complete loss of oxidase activity and absence of manganese ions." evidence="2">
    <original>H</original>
    <variation>L</variation>
    <location>
        <position position="96"/>
    </location>
</feature>
<feature type="mutagenesis site" description="Complete loss of oxidase activity and absence of manganese ions." evidence="2">
    <original>H</original>
    <variation>L</variation>
    <location>
        <position position="106"/>
    </location>
</feature>
<feature type="mutagenesis site" description="Complete loss of oxidase activity and absence of manganese ions." evidence="2">
    <original>H</original>
    <variation>L</variation>
    <location>
        <position position="145"/>
    </location>
</feature>
<feature type="mutagenesis site" description="Complete loss of oxidase activity and absence of manganese ions." evidence="2">
    <original>H</original>
    <variation>L</variation>
    <location>
        <position position="175"/>
    </location>
</feature>
<feature type="mutagenesis site" description="Complete loss of oxidase activity.">
    <original>W</original>
    <variation>L</variation>
    <location>
        <position position="274"/>
    </location>
</feature>
<accession>P36553</accession>
<protein>
    <recommendedName>
        <fullName evidence="1">Oxygen-dependent coproporphyrinogen-III oxidase</fullName>
        <shortName evidence="1">CPO</shortName>
        <shortName evidence="1">Coprogen oxidase</shortName>
        <shortName evidence="1">Coproporphyrinogenase</shortName>
        <ecNumber evidence="1">1.3.3.3</ecNumber>
    </recommendedName>
</protein>
<proteinExistence type="evidence at protein level"/>
<comment type="function">
    <text evidence="1 2 3">Involved in the heme biosynthesis. Catalyzes the aerobic oxidative decarboxylation of propionate groups of rings A and B of coproporphyrinogen-III to yield the vinyl groups in protoporphyrinogen-IX.</text>
</comment>
<comment type="catalytic activity">
    <reaction evidence="1 2 3">
        <text>coproporphyrinogen III + O2 + 2 H(+) = protoporphyrinogen IX + 2 CO2 + 2 H2O</text>
        <dbReference type="Rhea" id="RHEA:18257"/>
        <dbReference type="ChEBI" id="CHEBI:15377"/>
        <dbReference type="ChEBI" id="CHEBI:15378"/>
        <dbReference type="ChEBI" id="CHEBI:15379"/>
        <dbReference type="ChEBI" id="CHEBI:16526"/>
        <dbReference type="ChEBI" id="CHEBI:57307"/>
        <dbReference type="ChEBI" id="CHEBI:57309"/>
        <dbReference type="EC" id="1.3.3.3"/>
    </reaction>
</comment>
<comment type="cofactor">
    <cofactor evidence="1 2">
        <name>Mn(2+)</name>
        <dbReference type="ChEBI" id="CHEBI:29035"/>
    </cofactor>
</comment>
<comment type="activity regulation">
    <text evidence="2 3">Inhibited by protoporphyrinogen-IX, by metal chelator (EGTA) and by low concentrations of heavy metal ions.</text>
</comment>
<comment type="biophysicochemical properties">
    <kinetics>
        <KM evidence="2 3">2.6 uM for coproporphyrinogen-III (at pH 6 at 37 degrees Celsius)</KM>
        <KM evidence="2 3">3.1 uM for coproporphyrinogen-III (at pH 7)</KM>
        <Vmax evidence="2 3">1.3 umol/min/mg enzyme (at pH 6 at 37 degrees Celsius)</Vmax>
        <text evidence="2">kcat is 0.17 min(-1) for decarboxylation of coproporphyrinogen-III (at pH 6 and at 37 degrees Celsius).</text>
    </kinetics>
    <phDependence>
        <text evidence="2 3">Optimum pH is between 6 and 7.</text>
    </phDependence>
</comment>
<comment type="pathway">
    <text evidence="1">Porphyrin-containing compound metabolism; protoporphyrin-IX biosynthesis; protoporphyrinogen-IX from coproporphyrinogen-III (O2 route): step 1/1.</text>
</comment>
<comment type="subunit">
    <text evidence="1 2 3">Homodimer.</text>
</comment>
<comment type="subcellular location">
    <subcellularLocation>
        <location>Cytoplasm</location>
    </subcellularLocation>
</comment>
<comment type="mass spectrometry"/>
<comment type="similarity">
    <text evidence="1">Belongs to the aerobic coproporphyrinogen-III oxidase family.</text>
</comment>
<dbReference type="EC" id="1.3.3.3" evidence="1"/>
<dbReference type="EMBL" id="X75413">
    <property type="protein sequence ID" value="CAA53167.1"/>
    <property type="molecule type" value="Genomic_DNA"/>
</dbReference>
<dbReference type="EMBL" id="U00096">
    <property type="protein sequence ID" value="AAC75489.1"/>
    <property type="molecule type" value="Genomic_DNA"/>
</dbReference>
<dbReference type="EMBL" id="AP009048">
    <property type="protein sequence ID" value="BAA16319.1"/>
    <property type="molecule type" value="Genomic_DNA"/>
</dbReference>
<dbReference type="PIR" id="B36964">
    <property type="entry name" value="B36964"/>
</dbReference>
<dbReference type="RefSeq" id="NP_416931.1">
    <property type="nucleotide sequence ID" value="NC_000913.3"/>
</dbReference>
<dbReference type="RefSeq" id="WP_000801365.1">
    <property type="nucleotide sequence ID" value="NZ_LN832404.1"/>
</dbReference>
<dbReference type="SMR" id="P36553"/>
<dbReference type="BioGRID" id="4260574">
    <property type="interactions" value="16"/>
</dbReference>
<dbReference type="FunCoup" id="P36553">
    <property type="interactions" value="738"/>
</dbReference>
<dbReference type="IntAct" id="P36553">
    <property type="interactions" value="3"/>
</dbReference>
<dbReference type="STRING" id="511145.b2436"/>
<dbReference type="PaxDb" id="511145-b2436"/>
<dbReference type="DNASU" id="946908"/>
<dbReference type="EnsemblBacteria" id="AAC75489">
    <property type="protein sequence ID" value="AAC75489"/>
    <property type="gene ID" value="b2436"/>
</dbReference>
<dbReference type="GeneID" id="946908"/>
<dbReference type="KEGG" id="ecj:JW2429"/>
<dbReference type="KEGG" id="eco:b2436"/>
<dbReference type="KEGG" id="ecoc:C3026_13530"/>
<dbReference type="PATRIC" id="fig|1411691.4.peg.4295"/>
<dbReference type="EchoBASE" id="EB2106"/>
<dbReference type="eggNOG" id="COG0408">
    <property type="taxonomic scope" value="Bacteria"/>
</dbReference>
<dbReference type="HOGENOM" id="CLU_026169_0_1_6"/>
<dbReference type="InParanoid" id="P36553"/>
<dbReference type="OMA" id="VHANWRY"/>
<dbReference type="OrthoDB" id="9777553at2"/>
<dbReference type="PhylomeDB" id="P36553"/>
<dbReference type="BioCyc" id="EcoCyc:COPROGENOXI-MONOMER"/>
<dbReference type="BioCyc" id="MetaCyc:COPROGENOXI-MONOMER"/>
<dbReference type="BRENDA" id="1.3.3.3">
    <property type="organism ID" value="2026"/>
</dbReference>
<dbReference type="UniPathway" id="UPA00251">
    <property type="reaction ID" value="UER00322"/>
</dbReference>
<dbReference type="PRO" id="PR:P36553"/>
<dbReference type="Proteomes" id="UP000000625">
    <property type="component" value="Chromosome"/>
</dbReference>
<dbReference type="GO" id="GO:0005737">
    <property type="term" value="C:cytoplasm"/>
    <property type="evidence" value="ECO:0000314"/>
    <property type="project" value="EcoliWiki"/>
</dbReference>
<dbReference type="GO" id="GO:0004109">
    <property type="term" value="F:coproporphyrinogen oxidase activity"/>
    <property type="evidence" value="ECO:0000314"/>
    <property type="project" value="EcoCyc"/>
</dbReference>
<dbReference type="GO" id="GO:0030145">
    <property type="term" value="F:manganese ion binding"/>
    <property type="evidence" value="ECO:0000314"/>
    <property type="project" value="EcoCyc"/>
</dbReference>
<dbReference type="GO" id="GO:0042803">
    <property type="term" value="F:protein homodimerization activity"/>
    <property type="evidence" value="ECO:0000314"/>
    <property type="project" value="EcoCyc"/>
</dbReference>
<dbReference type="GO" id="GO:0046906">
    <property type="term" value="F:tetrapyrrole binding"/>
    <property type="evidence" value="ECO:0000315"/>
    <property type="project" value="EcoliWiki"/>
</dbReference>
<dbReference type="GO" id="GO:0006783">
    <property type="term" value="P:heme biosynthetic process"/>
    <property type="evidence" value="ECO:0000315"/>
    <property type="project" value="EcoliWiki"/>
</dbReference>
<dbReference type="GO" id="GO:0006782">
    <property type="term" value="P:protoporphyrinogen IX biosynthetic process"/>
    <property type="evidence" value="ECO:0000318"/>
    <property type="project" value="GO_Central"/>
</dbReference>
<dbReference type="GO" id="GO:0019353">
    <property type="term" value="P:protoporphyrinogen IX biosynthetic process from glutamate"/>
    <property type="evidence" value="ECO:0000269"/>
    <property type="project" value="EcoCyc"/>
</dbReference>
<dbReference type="GO" id="GO:0033194">
    <property type="term" value="P:response to hydroperoxide"/>
    <property type="evidence" value="ECO:0000315"/>
    <property type="project" value="EcoCyc"/>
</dbReference>
<dbReference type="FunFam" id="3.40.1500.10:FF:000001">
    <property type="entry name" value="Oxygen-dependent coproporphyrinogen-III oxidase"/>
    <property type="match status" value="1"/>
</dbReference>
<dbReference type="Gene3D" id="3.40.1500.10">
    <property type="entry name" value="Coproporphyrinogen III oxidase, aerobic"/>
    <property type="match status" value="1"/>
</dbReference>
<dbReference type="HAMAP" id="MF_00333">
    <property type="entry name" value="Coprogen_oxidas"/>
    <property type="match status" value="1"/>
</dbReference>
<dbReference type="InterPro" id="IPR001260">
    <property type="entry name" value="Coprogen_oxidase_aer"/>
</dbReference>
<dbReference type="InterPro" id="IPR036406">
    <property type="entry name" value="Coprogen_oxidase_aer_sf"/>
</dbReference>
<dbReference type="InterPro" id="IPR018375">
    <property type="entry name" value="Coprogen_oxidase_CS"/>
</dbReference>
<dbReference type="NCBIfam" id="NF003727">
    <property type="entry name" value="PRK05330.1"/>
    <property type="match status" value="1"/>
</dbReference>
<dbReference type="PANTHER" id="PTHR10755">
    <property type="entry name" value="COPROPORPHYRINOGEN III OXIDASE, MITOCHONDRIAL"/>
    <property type="match status" value="1"/>
</dbReference>
<dbReference type="PANTHER" id="PTHR10755:SF0">
    <property type="entry name" value="OXYGEN-DEPENDENT COPROPORPHYRINOGEN-III OXIDASE, MITOCHONDRIAL"/>
    <property type="match status" value="1"/>
</dbReference>
<dbReference type="Pfam" id="PF01218">
    <property type="entry name" value="Coprogen_oxidas"/>
    <property type="match status" value="1"/>
</dbReference>
<dbReference type="PIRSF" id="PIRSF000166">
    <property type="entry name" value="Coproporphyri_ox"/>
    <property type="match status" value="1"/>
</dbReference>
<dbReference type="PRINTS" id="PR00073">
    <property type="entry name" value="COPRGNOXDASE"/>
</dbReference>
<dbReference type="SUPFAM" id="SSF102886">
    <property type="entry name" value="Coproporphyrinogen III oxidase"/>
    <property type="match status" value="1"/>
</dbReference>
<dbReference type="PROSITE" id="PS01021">
    <property type="entry name" value="COPROGEN_OXIDASE"/>
    <property type="match status" value="1"/>
</dbReference>
<evidence type="ECO:0000255" key="1">
    <source>
        <dbReference type="HAMAP-Rule" id="MF_00333"/>
    </source>
</evidence>
<evidence type="ECO:0000269" key="2">
    <source>
    </source>
</evidence>
<evidence type="ECO:0000269" key="3">
    <source>
    </source>
</evidence>
<evidence type="ECO:0000305" key="4"/>
<organism>
    <name type="scientific">Escherichia coli (strain K12)</name>
    <dbReference type="NCBI Taxonomy" id="83333"/>
    <lineage>
        <taxon>Bacteria</taxon>
        <taxon>Pseudomonadati</taxon>
        <taxon>Pseudomonadota</taxon>
        <taxon>Gammaproteobacteria</taxon>
        <taxon>Enterobacterales</taxon>
        <taxon>Enterobacteriaceae</taxon>
        <taxon>Escherichia</taxon>
    </lineage>
</organism>